<gene>
    <name evidence="1" type="primary">yciZ</name>
    <name type="ordered locus">SFV_1298</name>
</gene>
<protein>
    <recommendedName>
        <fullName evidence="1">UPF0509 protein YciZ</fullName>
    </recommendedName>
</protein>
<reference key="1">
    <citation type="journal article" date="2006" name="BMC Genomics">
        <title>Complete genome sequence of Shigella flexneri 5b and comparison with Shigella flexneri 2a.</title>
        <authorList>
            <person name="Nie H."/>
            <person name="Yang F."/>
            <person name="Zhang X."/>
            <person name="Yang J."/>
            <person name="Chen L."/>
            <person name="Wang J."/>
            <person name="Xiong Z."/>
            <person name="Peng J."/>
            <person name="Sun L."/>
            <person name="Dong J."/>
            <person name="Xue Y."/>
            <person name="Xu X."/>
            <person name="Chen S."/>
            <person name="Yao Z."/>
            <person name="Shen Y."/>
            <person name="Jin Q."/>
        </authorList>
    </citation>
    <scope>NUCLEOTIDE SEQUENCE [LARGE SCALE GENOMIC DNA]</scope>
    <source>
        <strain>8401</strain>
    </source>
</reference>
<proteinExistence type="inferred from homology"/>
<dbReference type="EMBL" id="CP000266">
    <property type="protein sequence ID" value="ABF03503.1"/>
    <property type="molecule type" value="Genomic_DNA"/>
</dbReference>
<dbReference type="RefSeq" id="WP_001288369.1">
    <property type="nucleotide sequence ID" value="NC_008258.1"/>
</dbReference>
<dbReference type="KEGG" id="sfv:SFV_1298"/>
<dbReference type="HOGENOM" id="CLU_180697_1_0_6"/>
<dbReference type="Proteomes" id="UP000000659">
    <property type="component" value="Chromosome"/>
</dbReference>
<dbReference type="HAMAP" id="MF_01641">
    <property type="entry name" value="UPF0509"/>
    <property type="match status" value="1"/>
</dbReference>
<dbReference type="InterPro" id="IPR020887">
    <property type="entry name" value="UPF0509"/>
</dbReference>
<dbReference type="NCBIfam" id="NF010179">
    <property type="entry name" value="PRK13658.1"/>
    <property type="match status" value="1"/>
</dbReference>
<dbReference type="Pfam" id="PF23675">
    <property type="entry name" value="YciZ"/>
    <property type="match status" value="1"/>
</dbReference>
<name>YCIZ_SHIF8</name>
<accession>Q0T5B2</accession>
<evidence type="ECO:0000255" key="1">
    <source>
        <dbReference type="HAMAP-Rule" id="MF_01641"/>
    </source>
</evidence>
<feature type="chain" id="PRO_0000312015" description="UPF0509 protein YciZ">
    <location>
        <begin position="1"/>
        <end position="57"/>
    </location>
</feature>
<sequence>MSEFDAQRVAERIDIVLDILVAGDYHSAIHNLEILKAELLRQVAESTPDIPKTPWEI</sequence>
<organism>
    <name type="scientific">Shigella flexneri serotype 5b (strain 8401)</name>
    <dbReference type="NCBI Taxonomy" id="373384"/>
    <lineage>
        <taxon>Bacteria</taxon>
        <taxon>Pseudomonadati</taxon>
        <taxon>Pseudomonadota</taxon>
        <taxon>Gammaproteobacteria</taxon>
        <taxon>Enterobacterales</taxon>
        <taxon>Enterobacteriaceae</taxon>
        <taxon>Shigella</taxon>
    </lineage>
</organism>
<comment type="similarity">
    <text evidence="1">Belongs to the UPF0509 family.</text>
</comment>